<gene>
    <name type="ordered locus">plu4068</name>
</gene>
<keyword id="KW-0963">Cytoplasm</keyword>
<keyword id="KW-0378">Hydrolase</keyword>
<keyword id="KW-0546">Nucleotide metabolism</keyword>
<keyword id="KW-1185">Reference proteome</keyword>
<feature type="chain" id="PRO_0000123038" description="dTTP/UTP pyrophosphatase">
    <location>
        <begin position="1"/>
        <end position="195"/>
    </location>
</feature>
<feature type="active site" description="Proton acceptor" evidence="1">
    <location>
        <position position="70"/>
    </location>
</feature>
<feature type="site" description="Important for substrate specificity" evidence="1">
    <location>
        <position position="12"/>
    </location>
</feature>
<feature type="site" description="Important for substrate specificity" evidence="1">
    <location>
        <position position="71"/>
    </location>
</feature>
<feature type="site" description="Important for substrate specificity" evidence="1">
    <location>
        <position position="153"/>
    </location>
</feature>
<reference key="1">
    <citation type="journal article" date="2003" name="Nat. Biotechnol.">
        <title>The genome sequence of the entomopathogenic bacterium Photorhabdus luminescens.</title>
        <authorList>
            <person name="Duchaud E."/>
            <person name="Rusniok C."/>
            <person name="Frangeul L."/>
            <person name="Buchrieser C."/>
            <person name="Givaudan A."/>
            <person name="Taourit S."/>
            <person name="Bocs S."/>
            <person name="Boursaux-Eude C."/>
            <person name="Chandler M."/>
            <person name="Charles J.-F."/>
            <person name="Dassa E."/>
            <person name="Derose R."/>
            <person name="Derzelle S."/>
            <person name="Freyssinet G."/>
            <person name="Gaudriault S."/>
            <person name="Medigue C."/>
            <person name="Lanois A."/>
            <person name="Powell K."/>
            <person name="Siguier P."/>
            <person name="Vincent R."/>
            <person name="Wingate V."/>
            <person name="Zouine M."/>
            <person name="Glaser P."/>
            <person name="Boemare N."/>
            <person name="Danchin A."/>
            <person name="Kunst F."/>
        </authorList>
    </citation>
    <scope>NUCLEOTIDE SEQUENCE [LARGE SCALE GENOMIC DNA]</scope>
    <source>
        <strain>DSM 15139 / CIP 105565 / TT01</strain>
    </source>
</reference>
<dbReference type="EC" id="3.6.1.9" evidence="1"/>
<dbReference type="EMBL" id="BX571872">
    <property type="protein sequence ID" value="CAE16440.1"/>
    <property type="molecule type" value="Genomic_DNA"/>
</dbReference>
<dbReference type="RefSeq" id="WP_011148191.1">
    <property type="nucleotide sequence ID" value="NC_005126.1"/>
</dbReference>
<dbReference type="SMR" id="Q7N035"/>
<dbReference type="STRING" id="243265.plu4068"/>
<dbReference type="GeneID" id="48850287"/>
<dbReference type="KEGG" id="plu:plu4068"/>
<dbReference type="eggNOG" id="COG0424">
    <property type="taxonomic scope" value="Bacteria"/>
</dbReference>
<dbReference type="HOGENOM" id="CLU_040416_2_1_6"/>
<dbReference type="OrthoDB" id="9807767at2"/>
<dbReference type="Proteomes" id="UP000002514">
    <property type="component" value="Chromosome"/>
</dbReference>
<dbReference type="GO" id="GO:0005737">
    <property type="term" value="C:cytoplasm"/>
    <property type="evidence" value="ECO:0007669"/>
    <property type="project" value="UniProtKB-SubCell"/>
</dbReference>
<dbReference type="GO" id="GO:0036218">
    <property type="term" value="F:dTTP diphosphatase activity"/>
    <property type="evidence" value="ECO:0007669"/>
    <property type="project" value="RHEA"/>
</dbReference>
<dbReference type="GO" id="GO:0036221">
    <property type="term" value="F:UTP diphosphatase activity"/>
    <property type="evidence" value="ECO:0007669"/>
    <property type="project" value="RHEA"/>
</dbReference>
<dbReference type="GO" id="GO:0009117">
    <property type="term" value="P:nucleotide metabolic process"/>
    <property type="evidence" value="ECO:0007669"/>
    <property type="project" value="UniProtKB-KW"/>
</dbReference>
<dbReference type="CDD" id="cd00555">
    <property type="entry name" value="Maf"/>
    <property type="match status" value="1"/>
</dbReference>
<dbReference type="FunFam" id="3.90.950.10:FF:000004">
    <property type="entry name" value="dTTP/UTP pyrophosphatase"/>
    <property type="match status" value="1"/>
</dbReference>
<dbReference type="Gene3D" id="3.90.950.10">
    <property type="match status" value="1"/>
</dbReference>
<dbReference type="HAMAP" id="MF_00528">
    <property type="entry name" value="Maf"/>
    <property type="match status" value="1"/>
</dbReference>
<dbReference type="InterPro" id="IPR029001">
    <property type="entry name" value="ITPase-like_fam"/>
</dbReference>
<dbReference type="InterPro" id="IPR003697">
    <property type="entry name" value="Maf-like"/>
</dbReference>
<dbReference type="NCBIfam" id="TIGR00172">
    <property type="entry name" value="maf"/>
    <property type="match status" value="1"/>
</dbReference>
<dbReference type="PANTHER" id="PTHR43213">
    <property type="entry name" value="BIFUNCTIONAL DTTP/UTP PYROPHOSPHATASE/METHYLTRANSFERASE PROTEIN-RELATED"/>
    <property type="match status" value="1"/>
</dbReference>
<dbReference type="PANTHER" id="PTHR43213:SF5">
    <property type="entry name" value="BIFUNCTIONAL DTTP_UTP PYROPHOSPHATASE_METHYLTRANSFERASE PROTEIN-RELATED"/>
    <property type="match status" value="1"/>
</dbReference>
<dbReference type="Pfam" id="PF02545">
    <property type="entry name" value="Maf"/>
    <property type="match status" value="1"/>
</dbReference>
<dbReference type="PIRSF" id="PIRSF006305">
    <property type="entry name" value="Maf"/>
    <property type="match status" value="1"/>
</dbReference>
<dbReference type="SUPFAM" id="SSF52972">
    <property type="entry name" value="ITPase-like"/>
    <property type="match status" value="1"/>
</dbReference>
<accession>Q7N035</accession>
<organism>
    <name type="scientific">Photorhabdus laumondii subsp. laumondii (strain DSM 15139 / CIP 105565 / TT01)</name>
    <name type="common">Photorhabdus luminescens subsp. laumondii</name>
    <dbReference type="NCBI Taxonomy" id="243265"/>
    <lineage>
        <taxon>Bacteria</taxon>
        <taxon>Pseudomonadati</taxon>
        <taxon>Pseudomonadota</taxon>
        <taxon>Gammaproteobacteria</taxon>
        <taxon>Enterobacterales</taxon>
        <taxon>Morganellaceae</taxon>
        <taxon>Photorhabdus</taxon>
    </lineage>
</organism>
<name>NTPPA_PHOLL</name>
<comment type="function">
    <text evidence="1">Nucleoside triphosphate pyrophosphatase that hydrolyzes dTTP and UTP. May have a dual role in cell division arrest and in preventing the incorporation of modified nucleotides into cellular nucleic acids.</text>
</comment>
<comment type="catalytic activity">
    <reaction evidence="1">
        <text>dTTP + H2O = dTMP + diphosphate + H(+)</text>
        <dbReference type="Rhea" id="RHEA:28534"/>
        <dbReference type="ChEBI" id="CHEBI:15377"/>
        <dbReference type="ChEBI" id="CHEBI:15378"/>
        <dbReference type="ChEBI" id="CHEBI:33019"/>
        <dbReference type="ChEBI" id="CHEBI:37568"/>
        <dbReference type="ChEBI" id="CHEBI:63528"/>
        <dbReference type="EC" id="3.6.1.9"/>
    </reaction>
</comment>
<comment type="catalytic activity">
    <reaction evidence="1">
        <text>UTP + H2O = UMP + diphosphate + H(+)</text>
        <dbReference type="Rhea" id="RHEA:29395"/>
        <dbReference type="ChEBI" id="CHEBI:15377"/>
        <dbReference type="ChEBI" id="CHEBI:15378"/>
        <dbReference type="ChEBI" id="CHEBI:33019"/>
        <dbReference type="ChEBI" id="CHEBI:46398"/>
        <dbReference type="ChEBI" id="CHEBI:57865"/>
        <dbReference type="EC" id="3.6.1.9"/>
    </reaction>
</comment>
<comment type="cofactor">
    <cofactor evidence="1">
        <name>a divalent metal cation</name>
        <dbReference type="ChEBI" id="CHEBI:60240"/>
    </cofactor>
</comment>
<comment type="subcellular location">
    <subcellularLocation>
        <location evidence="1">Cytoplasm</location>
    </subcellularLocation>
</comment>
<comment type="similarity">
    <text evidence="1">Belongs to the Maf family. YhdE subfamily.</text>
</comment>
<evidence type="ECO:0000255" key="1">
    <source>
        <dbReference type="HAMAP-Rule" id="MF_00528"/>
    </source>
</evidence>
<protein>
    <recommendedName>
        <fullName evidence="1">dTTP/UTP pyrophosphatase</fullName>
        <shortName evidence="1">dTTPase/UTPase</shortName>
        <ecNumber evidence="1">3.6.1.9</ecNumber>
    </recommendedName>
    <alternativeName>
        <fullName evidence="1">Nucleoside triphosphate pyrophosphatase</fullName>
    </alternativeName>
    <alternativeName>
        <fullName evidence="1">Nucleotide pyrophosphatase</fullName>
        <shortName evidence="1">Nucleotide PPase</shortName>
    </alternativeName>
</protein>
<sequence>MKTLYLASGSPRRRELVELLDFKFEILSPQVKEQRQEGETPRQYVSRLAKDKSLAGVAIAPEDFLVLGADTVVVLNGKVLEKPRSEQHAVAMLSALSGQSHQVITAIAISDSQRTLSDIVITDVTFRQLSTQEILDYVATGEPMDKAGAYGIQGKAGCFVKTLNGSYHSVVGLPLVETHELITKFFALVDGKGNS</sequence>
<proteinExistence type="inferred from homology"/>